<sequence>MPQNKVLSFPLPEGTLLEDITKNKWILGKQLGSGGFGLVYQVSCKSKEIDCVAKIELKESGGLFCEINFYNRVMKNKTSLDTWMKEQKIDYIGIPSFHGFGITIYKNVEYRFAIIQRLGRDLENILSEKEKFNITVIKKLAIKILDILKFIHSKEFSHGDIKAGNILFGKDDDKVYLVDYGLATKYSSNGKHKEYTINPKNRHNGTMAFTSIDAHKGVTVSRRGDLESLGFCMLKWYSGKLPWEKYEKEPENVQGMKEAFVNNISKKTIPFKNAGIIYNYIKVVTKLEYEEAPNYESLKQMFL</sequence>
<organismHost>
    <name type="scientific">Vertebrata</name>
    <dbReference type="NCBI Taxonomy" id="7742"/>
</organismHost>
<name>V212_FOWPN</name>
<dbReference type="EC" id="2.7.11.1"/>
<dbReference type="EMBL" id="AF198100">
    <property type="protein sequence ID" value="AAF44556.1"/>
    <property type="molecule type" value="Genomic_DNA"/>
</dbReference>
<dbReference type="RefSeq" id="NP_039175.1">
    <property type="nucleotide sequence ID" value="NC_002188.1"/>
</dbReference>
<dbReference type="SMR" id="Q9J523"/>
<dbReference type="GeneID" id="1486784"/>
<dbReference type="KEGG" id="vg:1486784"/>
<dbReference type="Proteomes" id="UP000008597">
    <property type="component" value="Segment"/>
</dbReference>
<dbReference type="GO" id="GO:0005524">
    <property type="term" value="F:ATP binding"/>
    <property type="evidence" value="ECO:0007669"/>
    <property type="project" value="UniProtKB-KW"/>
</dbReference>
<dbReference type="GO" id="GO:0106310">
    <property type="term" value="F:protein serine kinase activity"/>
    <property type="evidence" value="ECO:0007669"/>
    <property type="project" value="RHEA"/>
</dbReference>
<dbReference type="GO" id="GO:0004674">
    <property type="term" value="F:protein serine/threonine kinase activity"/>
    <property type="evidence" value="ECO:0007669"/>
    <property type="project" value="UniProtKB-KW"/>
</dbReference>
<dbReference type="Gene3D" id="1.10.510.10">
    <property type="entry name" value="Transferase(Phosphotransferase) domain 1"/>
    <property type="match status" value="1"/>
</dbReference>
<dbReference type="InterPro" id="IPR050235">
    <property type="entry name" value="CK1_Ser-Thr_kinase"/>
</dbReference>
<dbReference type="InterPro" id="IPR011009">
    <property type="entry name" value="Kinase-like_dom_sf"/>
</dbReference>
<dbReference type="InterPro" id="IPR000719">
    <property type="entry name" value="Prot_kinase_dom"/>
</dbReference>
<dbReference type="InterPro" id="IPR017441">
    <property type="entry name" value="Protein_kinase_ATP_BS"/>
</dbReference>
<dbReference type="InterPro" id="IPR008271">
    <property type="entry name" value="Ser/Thr_kinase_AS"/>
</dbReference>
<dbReference type="PANTHER" id="PTHR11909">
    <property type="entry name" value="CASEIN KINASE-RELATED"/>
    <property type="match status" value="1"/>
</dbReference>
<dbReference type="Pfam" id="PF00069">
    <property type="entry name" value="Pkinase"/>
    <property type="match status" value="1"/>
</dbReference>
<dbReference type="SMART" id="SM00220">
    <property type="entry name" value="S_TKc"/>
    <property type="match status" value="1"/>
</dbReference>
<dbReference type="SUPFAM" id="SSF56112">
    <property type="entry name" value="Protein kinase-like (PK-like)"/>
    <property type="match status" value="1"/>
</dbReference>
<dbReference type="PROSITE" id="PS00107">
    <property type="entry name" value="PROTEIN_KINASE_ATP"/>
    <property type="match status" value="1"/>
</dbReference>
<dbReference type="PROSITE" id="PS50011">
    <property type="entry name" value="PROTEIN_KINASE_DOM"/>
    <property type="match status" value="1"/>
</dbReference>
<dbReference type="PROSITE" id="PS00108">
    <property type="entry name" value="PROTEIN_KINASE_ST"/>
    <property type="match status" value="1"/>
</dbReference>
<accession>Q9J523</accession>
<gene>
    <name type="ordered locus">FPV212</name>
</gene>
<protein>
    <recommendedName>
        <fullName>Probable serine/threonine-protein kinase FPV212</fullName>
        <ecNumber>2.7.11.1</ecNumber>
    </recommendedName>
</protein>
<organism>
    <name type="scientific">Fowlpox virus (strain NVSL)</name>
    <name type="common">FPV</name>
    <dbReference type="NCBI Taxonomy" id="928301"/>
    <lineage>
        <taxon>Viruses</taxon>
        <taxon>Varidnaviria</taxon>
        <taxon>Bamfordvirae</taxon>
        <taxon>Nucleocytoviricota</taxon>
        <taxon>Pokkesviricetes</taxon>
        <taxon>Chitovirales</taxon>
        <taxon>Poxviridae</taxon>
        <taxon>Chordopoxvirinae</taxon>
        <taxon>Avipoxvirus</taxon>
        <taxon>Fowlpox virus</taxon>
    </lineage>
</organism>
<proteinExistence type="inferred from homology"/>
<feature type="chain" id="PRO_0000086787" description="Probable serine/threonine-protein kinase FPV212">
    <location>
        <begin position="1"/>
        <end position="303"/>
    </location>
</feature>
<feature type="domain" description="Protein kinase" evidence="1">
    <location>
        <begin position="25"/>
        <end position="303"/>
    </location>
</feature>
<feature type="active site" description="Proton acceptor" evidence="1 2">
    <location>
        <position position="160"/>
    </location>
</feature>
<feature type="binding site" evidence="1">
    <location>
        <begin position="31"/>
        <end position="39"/>
    </location>
    <ligand>
        <name>ATP</name>
        <dbReference type="ChEBI" id="CHEBI:30616"/>
    </ligand>
</feature>
<feature type="binding site" evidence="1">
    <location>
        <position position="54"/>
    </location>
    <ligand>
        <name>ATP</name>
        <dbReference type="ChEBI" id="CHEBI:30616"/>
    </ligand>
</feature>
<reference key="1">
    <citation type="journal article" date="2000" name="J. Virol.">
        <title>The genome of fowlpox virus.</title>
        <authorList>
            <person name="Afonso C.L."/>
            <person name="Tulman E.R."/>
            <person name="Lu Z."/>
            <person name="Zsak L."/>
            <person name="Kutish G.F."/>
            <person name="Rock D.L."/>
        </authorList>
    </citation>
    <scope>NUCLEOTIDE SEQUENCE [LARGE SCALE GENOMIC DNA]</scope>
</reference>
<keyword id="KW-0067">ATP-binding</keyword>
<keyword id="KW-0418">Kinase</keyword>
<keyword id="KW-0547">Nucleotide-binding</keyword>
<keyword id="KW-1185">Reference proteome</keyword>
<keyword id="KW-0723">Serine/threonine-protein kinase</keyword>
<keyword id="KW-0808">Transferase</keyword>
<comment type="catalytic activity">
    <reaction>
        <text>L-seryl-[protein] + ATP = O-phospho-L-seryl-[protein] + ADP + H(+)</text>
        <dbReference type="Rhea" id="RHEA:17989"/>
        <dbReference type="Rhea" id="RHEA-COMP:9863"/>
        <dbReference type="Rhea" id="RHEA-COMP:11604"/>
        <dbReference type="ChEBI" id="CHEBI:15378"/>
        <dbReference type="ChEBI" id="CHEBI:29999"/>
        <dbReference type="ChEBI" id="CHEBI:30616"/>
        <dbReference type="ChEBI" id="CHEBI:83421"/>
        <dbReference type="ChEBI" id="CHEBI:456216"/>
        <dbReference type="EC" id="2.7.11.1"/>
    </reaction>
</comment>
<comment type="catalytic activity">
    <reaction>
        <text>L-threonyl-[protein] + ATP = O-phospho-L-threonyl-[protein] + ADP + H(+)</text>
        <dbReference type="Rhea" id="RHEA:46608"/>
        <dbReference type="Rhea" id="RHEA-COMP:11060"/>
        <dbReference type="Rhea" id="RHEA-COMP:11605"/>
        <dbReference type="ChEBI" id="CHEBI:15378"/>
        <dbReference type="ChEBI" id="CHEBI:30013"/>
        <dbReference type="ChEBI" id="CHEBI:30616"/>
        <dbReference type="ChEBI" id="CHEBI:61977"/>
        <dbReference type="ChEBI" id="CHEBI:456216"/>
        <dbReference type="EC" id="2.7.11.1"/>
    </reaction>
</comment>
<comment type="similarity">
    <text evidence="1">Belongs to the protein kinase superfamily. Ser/Thr protein kinase family. Poxviruses subfamily.</text>
</comment>
<evidence type="ECO:0000255" key="1">
    <source>
        <dbReference type="PROSITE-ProRule" id="PRU00159"/>
    </source>
</evidence>
<evidence type="ECO:0000255" key="2">
    <source>
        <dbReference type="PROSITE-ProRule" id="PRU10027"/>
    </source>
</evidence>